<name>GLYA_HYDCU</name>
<keyword id="KW-0028">Amino-acid biosynthesis</keyword>
<keyword id="KW-0963">Cytoplasm</keyword>
<keyword id="KW-0554">One-carbon metabolism</keyword>
<keyword id="KW-0663">Pyridoxal phosphate</keyword>
<keyword id="KW-0808">Transferase</keyword>
<sequence>MFDKNMTIAGYDDALADAMNAEAQRQEDHIELIASENYTSPRVMEAQGSVLTNKYAEGYPNKRYYGGCEHVDVVEQLAIDRAKELFGADYANVQPHSGSQANAPVYMALLEPGDTVLGMSLAHGGHLTHGSHVSFSGKMYNAVQYGLNPETGVIDYDEVERLAKEHKPKMIIAGFSAYSQVVDWQKFREIADAVGAYLMVDMAHVAGLVAAGEYPNPVQIADVTTTTTHKTLRGPRSGLILAKSNPEIEKKLNSAIFPGAQGGPLMHVIAAKAVAFKEAMEPEFKTYAKQVKVNAKAMADVFMARGFDVVSKGTENHLFLVSFIEQGLTGKLVDAALGEAHITINKNSVPNDPMSPFVTSGIRVGTAASTTRGFTEEDSKNLASWMCDVIDSCQQASESWDEKVVADVREKVKALCAARPVYK</sequence>
<accession>Q31FS6</accession>
<reference key="1">
    <citation type="journal article" date="2006" name="PLoS Biol.">
        <title>The genome of deep-sea vent chemolithoautotroph Thiomicrospira crunogena XCL-2.</title>
        <authorList>
            <person name="Scott K.M."/>
            <person name="Sievert S.M."/>
            <person name="Abril F.N."/>
            <person name="Ball L.A."/>
            <person name="Barrett C.J."/>
            <person name="Blake R.A."/>
            <person name="Boller A.J."/>
            <person name="Chain P.S.G."/>
            <person name="Clark J.A."/>
            <person name="Davis C.R."/>
            <person name="Detter C."/>
            <person name="Do K.F."/>
            <person name="Dobrinski K.P."/>
            <person name="Faza B.I."/>
            <person name="Fitzpatrick K.A."/>
            <person name="Freyermuth S.K."/>
            <person name="Harmer T.L."/>
            <person name="Hauser L.J."/>
            <person name="Huegler M."/>
            <person name="Kerfeld C.A."/>
            <person name="Klotz M.G."/>
            <person name="Kong W.W."/>
            <person name="Land M."/>
            <person name="Lapidus A."/>
            <person name="Larimer F.W."/>
            <person name="Longo D.L."/>
            <person name="Lucas S."/>
            <person name="Malfatti S.A."/>
            <person name="Massey S.E."/>
            <person name="Martin D.D."/>
            <person name="McCuddin Z."/>
            <person name="Meyer F."/>
            <person name="Moore J.L."/>
            <person name="Ocampo L.H. Jr."/>
            <person name="Paul J.H."/>
            <person name="Paulsen I.T."/>
            <person name="Reep D.K."/>
            <person name="Ren Q."/>
            <person name="Ross R.L."/>
            <person name="Sato P.Y."/>
            <person name="Thomas P."/>
            <person name="Tinkham L.E."/>
            <person name="Zeruth G.T."/>
        </authorList>
    </citation>
    <scope>NUCLEOTIDE SEQUENCE [LARGE SCALE GENOMIC DNA]</scope>
    <source>
        <strain>DSM 25203 / XCL-2</strain>
    </source>
</reference>
<proteinExistence type="inferred from homology"/>
<organism>
    <name type="scientific">Hydrogenovibrio crunogenus (strain DSM 25203 / XCL-2)</name>
    <name type="common">Thiomicrospira crunogena</name>
    <dbReference type="NCBI Taxonomy" id="317025"/>
    <lineage>
        <taxon>Bacteria</taxon>
        <taxon>Pseudomonadati</taxon>
        <taxon>Pseudomonadota</taxon>
        <taxon>Gammaproteobacteria</taxon>
        <taxon>Thiotrichales</taxon>
        <taxon>Piscirickettsiaceae</taxon>
        <taxon>Hydrogenovibrio</taxon>
    </lineage>
</organism>
<protein>
    <recommendedName>
        <fullName evidence="1">Serine hydroxymethyltransferase</fullName>
        <shortName evidence="1">SHMT</shortName>
        <shortName evidence="1">Serine methylase</shortName>
        <ecNumber evidence="1">2.1.2.1</ecNumber>
    </recommendedName>
</protein>
<evidence type="ECO:0000255" key="1">
    <source>
        <dbReference type="HAMAP-Rule" id="MF_00051"/>
    </source>
</evidence>
<feature type="chain" id="PRO_0000235044" description="Serine hydroxymethyltransferase">
    <location>
        <begin position="1"/>
        <end position="423"/>
    </location>
</feature>
<feature type="binding site" evidence="1">
    <location>
        <position position="121"/>
    </location>
    <ligand>
        <name>(6S)-5,6,7,8-tetrahydrofolate</name>
        <dbReference type="ChEBI" id="CHEBI:57453"/>
    </ligand>
</feature>
<feature type="binding site" evidence="1">
    <location>
        <begin position="125"/>
        <end position="127"/>
    </location>
    <ligand>
        <name>(6S)-5,6,7,8-tetrahydrofolate</name>
        <dbReference type="ChEBI" id="CHEBI:57453"/>
    </ligand>
</feature>
<feature type="binding site" evidence="1">
    <location>
        <begin position="355"/>
        <end position="357"/>
    </location>
    <ligand>
        <name>(6S)-5,6,7,8-tetrahydrofolate</name>
        <dbReference type="ChEBI" id="CHEBI:57453"/>
    </ligand>
</feature>
<feature type="site" description="Plays an important role in substrate specificity" evidence="1">
    <location>
        <position position="229"/>
    </location>
</feature>
<feature type="modified residue" description="N6-(pyridoxal phosphate)lysine" evidence="1">
    <location>
        <position position="230"/>
    </location>
</feature>
<gene>
    <name evidence="1" type="primary">glyA</name>
    <name type="ordered locus">Tcr_1402</name>
</gene>
<dbReference type="EC" id="2.1.2.1" evidence="1"/>
<dbReference type="EMBL" id="CP000109">
    <property type="protein sequence ID" value="ABB41997.1"/>
    <property type="molecule type" value="Genomic_DNA"/>
</dbReference>
<dbReference type="SMR" id="Q31FS6"/>
<dbReference type="STRING" id="317025.Tcr_1402"/>
<dbReference type="KEGG" id="tcx:Tcr_1402"/>
<dbReference type="eggNOG" id="COG0112">
    <property type="taxonomic scope" value="Bacteria"/>
</dbReference>
<dbReference type="HOGENOM" id="CLU_022477_2_1_6"/>
<dbReference type="OrthoDB" id="9803846at2"/>
<dbReference type="UniPathway" id="UPA00193"/>
<dbReference type="UniPathway" id="UPA00288">
    <property type="reaction ID" value="UER01023"/>
</dbReference>
<dbReference type="GO" id="GO:0005829">
    <property type="term" value="C:cytosol"/>
    <property type="evidence" value="ECO:0007669"/>
    <property type="project" value="TreeGrafter"/>
</dbReference>
<dbReference type="GO" id="GO:0004372">
    <property type="term" value="F:glycine hydroxymethyltransferase activity"/>
    <property type="evidence" value="ECO:0007669"/>
    <property type="project" value="UniProtKB-UniRule"/>
</dbReference>
<dbReference type="GO" id="GO:0030170">
    <property type="term" value="F:pyridoxal phosphate binding"/>
    <property type="evidence" value="ECO:0007669"/>
    <property type="project" value="UniProtKB-UniRule"/>
</dbReference>
<dbReference type="GO" id="GO:0019264">
    <property type="term" value="P:glycine biosynthetic process from serine"/>
    <property type="evidence" value="ECO:0007669"/>
    <property type="project" value="UniProtKB-UniRule"/>
</dbReference>
<dbReference type="GO" id="GO:0035999">
    <property type="term" value="P:tetrahydrofolate interconversion"/>
    <property type="evidence" value="ECO:0007669"/>
    <property type="project" value="UniProtKB-UniRule"/>
</dbReference>
<dbReference type="CDD" id="cd00378">
    <property type="entry name" value="SHMT"/>
    <property type="match status" value="1"/>
</dbReference>
<dbReference type="FunFam" id="3.40.640.10:FF:000001">
    <property type="entry name" value="Serine hydroxymethyltransferase"/>
    <property type="match status" value="1"/>
</dbReference>
<dbReference type="FunFam" id="3.90.1150.10:FF:000003">
    <property type="entry name" value="Serine hydroxymethyltransferase"/>
    <property type="match status" value="1"/>
</dbReference>
<dbReference type="Gene3D" id="3.90.1150.10">
    <property type="entry name" value="Aspartate Aminotransferase, domain 1"/>
    <property type="match status" value="1"/>
</dbReference>
<dbReference type="Gene3D" id="3.40.640.10">
    <property type="entry name" value="Type I PLP-dependent aspartate aminotransferase-like (Major domain)"/>
    <property type="match status" value="1"/>
</dbReference>
<dbReference type="HAMAP" id="MF_00051">
    <property type="entry name" value="SHMT"/>
    <property type="match status" value="1"/>
</dbReference>
<dbReference type="InterPro" id="IPR015424">
    <property type="entry name" value="PyrdxlP-dep_Trfase"/>
</dbReference>
<dbReference type="InterPro" id="IPR015421">
    <property type="entry name" value="PyrdxlP-dep_Trfase_major"/>
</dbReference>
<dbReference type="InterPro" id="IPR015422">
    <property type="entry name" value="PyrdxlP-dep_Trfase_small"/>
</dbReference>
<dbReference type="InterPro" id="IPR001085">
    <property type="entry name" value="Ser_HO-MeTrfase"/>
</dbReference>
<dbReference type="InterPro" id="IPR049943">
    <property type="entry name" value="Ser_HO-MeTrfase-like"/>
</dbReference>
<dbReference type="InterPro" id="IPR019798">
    <property type="entry name" value="Ser_HO-MeTrfase_PLP_BS"/>
</dbReference>
<dbReference type="InterPro" id="IPR039429">
    <property type="entry name" value="SHMT-like_dom"/>
</dbReference>
<dbReference type="NCBIfam" id="NF000586">
    <property type="entry name" value="PRK00011.1"/>
    <property type="match status" value="1"/>
</dbReference>
<dbReference type="PANTHER" id="PTHR11680">
    <property type="entry name" value="SERINE HYDROXYMETHYLTRANSFERASE"/>
    <property type="match status" value="1"/>
</dbReference>
<dbReference type="PANTHER" id="PTHR11680:SF50">
    <property type="entry name" value="SERINE HYDROXYMETHYLTRANSFERASE"/>
    <property type="match status" value="1"/>
</dbReference>
<dbReference type="Pfam" id="PF00464">
    <property type="entry name" value="SHMT"/>
    <property type="match status" value="1"/>
</dbReference>
<dbReference type="PIRSF" id="PIRSF000412">
    <property type="entry name" value="SHMT"/>
    <property type="match status" value="1"/>
</dbReference>
<dbReference type="SUPFAM" id="SSF53383">
    <property type="entry name" value="PLP-dependent transferases"/>
    <property type="match status" value="1"/>
</dbReference>
<dbReference type="PROSITE" id="PS00096">
    <property type="entry name" value="SHMT"/>
    <property type="match status" value="1"/>
</dbReference>
<comment type="function">
    <text evidence="1">Catalyzes the reversible interconversion of serine and glycine with tetrahydrofolate (THF) serving as the one-carbon carrier. This reaction serves as the major source of one-carbon groups required for the biosynthesis of purines, thymidylate, methionine, and other important biomolecules. Also exhibits THF-independent aldolase activity toward beta-hydroxyamino acids, producing glycine and aldehydes, via a retro-aldol mechanism.</text>
</comment>
<comment type="catalytic activity">
    <reaction evidence="1">
        <text>(6R)-5,10-methylene-5,6,7,8-tetrahydrofolate + glycine + H2O = (6S)-5,6,7,8-tetrahydrofolate + L-serine</text>
        <dbReference type="Rhea" id="RHEA:15481"/>
        <dbReference type="ChEBI" id="CHEBI:15377"/>
        <dbReference type="ChEBI" id="CHEBI:15636"/>
        <dbReference type="ChEBI" id="CHEBI:33384"/>
        <dbReference type="ChEBI" id="CHEBI:57305"/>
        <dbReference type="ChEBI" id="CHEBI:57453"/>
        <dbReference type="EC" id="2.1.2.1"/>
    </reaction>
</comment>
<comment type="cofactor">
    <cofactor evidence="1">
        <name>pyridoxal 5'-phosphate</name>
        <dbReference type="ChEBI" id="CHEBI:597326"/>
    </cofactor>
</comment>
<comment type="pathway">
    <text evidence="1">One-carbon metabolism; tetrahydrofolate interconversion.</text>
</comment>
<comment type="pathway">
    <text evidence="1">Amino-acid biosynthesis; glycine biosynthesis; glycine from L-serine: step 1/1.</text>
</comment>
<comment type="subunit">
    <text evidence="1">Homodimer.</text>
</comment>
<comment type="subcellular location">
    <subcellularLocation>
        <location evidence="1">Cytoplasm</location>
    </subcellularLocation>
</comment>
<comment type="similarity">
    <text evidence="1">Belongs to the SHMT family.</text>
</comment>